<comment type="function">
    <text evidence="1">An essential GTPase that binds both GDP and GTP, with rapid nucleotide exchange. Plays a role in 16S rRNA processing and 30S ribosomal subunit biogenesis and possibly also in cell cycle regulation and energy metabolism.</text>
</comment>
<comment type="subunit">
    <text evidence="1">Monomer.</text>
</comment>
<comment type="subcellular location">
    <subcellularLocation>
        <location>Cytoplasm</location>
    </subcellularLocation>
    <subcellularLocation>
        <location evidence="1">Cell inner membrane</location>
        <topology evidence="1">Peripheral membrane protein</topology>
    </subcellularLocation>
</comment>
<comment type="similarity">
    <text evidence="1 2">Belongs to the TRAFAC class TrmE-Era-EngA-EngB-Septin-like GTPase superfamily. Era GTPase family.</text>
</comment>
<name>ERA_CHRVO</name>
<proteinExistence type="inferred from homology"/>
<accession>Q7NWC3</accession>
<evidence type="ECO:0000255" key="1">
    <source>
        <dbReference type="HAMAP-Rule" id="MF_00367"/>
    </source>
</evidence>
<evidence type="ECO:0000255" key="2">
    <source>
        <dbReference type="PROSITE-ProRule" id="PRU01050"/>
    </source>
</evidence>
<protein>
    <recommendedName>
        <fullName evidence="1">GTPase Era</fullName>
    </recommendedName>
</protein>
<sequence length="296" mass="33498">MTDTPFHCGFVAIVGRPNVGKSTLMNHLIGQKISITSKKSQTTRHRVTGIHTEDAAQFVFVDTPGFQTYHKGALNEALNKSVKDSLGSVDCVLFLLEAMRFTAADREVMALLPKKTPVILVVNKLDKAKDKLTLQAFIDEVTAEFEFAGVEVVSAKHGQRLAELLDQVRPHLPESMPLYPEDMITDKNERFLAAEIVREKLFRYLGEELPYEMNVEVEMFEMDGALRRIHIAVLVDKEHQKPIVIGRGGEKLKKISTEARLDMEKLFDGKVFLQVWVKVKSGWADDVRFLREFGLD</sequence>
<organism>
    <name type="scientific">Chromobacterium violaceum (strain ATCC 12472 / DSM 30191 / JCM 1249 / CCUG 213 / NBRC 12614 / NCIMB 9131 / NCTC 9757 / MK)</name>
    <dbReference type="NCBI Taxonomy" id="243365"/>
    <lineage>
        <taxon>Bacteria</taxon>
        <taxon>Pseudomonadati</taxon>
        <taxon>Pseudomonadota</taxon>
        <taxon>Betaproteobacteria</taxon>
        <taxon>Neisseriales</taxon>
        <taxon>Chromobacteriaceae</taxon>
        <taxon>Chromobacterium</taxon>
    </lineage>
</organism>
<gene>
    <name evidence="1" type="primary">era</name>
    <name type="ordered locus">CV_2067</name>
</gene>
<reference key="1">
    <citation type="journal article" date="2003" name="Proc. Natl. Acad. Sci. U.S.A.">
        <title>The complete genome sequence of Chromobacterium violaceum reveals remarkable and exploitable bacterial adaptability.</title>
        <authorList>
            <person name="Vasconcelos A.T.R."/>
            <person name="de Almeida D.F."/>
            <person name="Hungria M."/>
            <person name="Guimaraes C.T."/>
            <person name="Antonio R.V."/>
            <person name="Almeida F.C."/>
            <person name="de Almeida L.G.P."/>
            <person name="de Almeida R."/>
            <person name="Alves-Gomes J.A."/>
            <person name="Andrade E.M."/>
            <person name="Araripe J."/>
            <person name="de Araujo M.F.F."/>
            <person name="Astolfi-Filho S."/>
            <person name="Azevedo V."/>
            <person name="Baptista A.J."/>
            <person name="Bataus L.A.M."/>
            <person name="Batista J.S."/>
            <person name="Belo A."/>
            <person name="van den Berg C."/>
            <person name="Bogo M."/>
            <person name="Bonatto S."/>
            <person name="Bordignon J."/>
            <person name="Brigido M.M."/>
            <person name="Brito C.A."/>
            <person name="Brocchi M."/>
            <person name="Burity H.A."/>
            <person name="Camargo A.A."/>
            <person name="Cardoso D.D.P."/>
            <person name="Carneiro N.P."/>
            <person name="Carraro D.M."/>
            <person name="Carvalho C.M.B."/>
            <person name="Cascardo J.C.M."/>
            <person name="Cavada B.S."/>
            <person name="Chueire L.M.O."/>
            <person name="Creczynski-Pasa T.B."/>
            <person name="Cunha-Junior N.C."/>
            <person name="Fagundes N."/>
            <person name="Falcao C.L."/>
            <person name="Fantinatti F."/>
            <person name="Farias I.P."/>
            <person name="Felipe M.S.S."/>
            <person name="Ferrari L.P."/>
            <person name="Ferro J.A."/>
            <person name="Ferro M.I.T."/>
            <person name="Franco G.R."/>
            <person name="Freitas N.S.A."/>
            <person name="Furlan L.R."/>
            <person name="Gazzinelli R.T."/>
            <person name="Gomes E.A."/>
            <person name="Goncalves P.R."/>
            <person name="Grangeiro T.B."/>
            <person name="Grattapaglia D."/>
            <person name="Grisard E.C."/>
            <person name="Hanna E.S."/>
            <person name="Jardim S.N."/>
            <person name="Laurino J."/>
            <person name="Leoi L.C.T."/>
            <person name="Lima L.F.A."/>
            <person name="Loureiro M.F."/>
            <person name="Lyra M.C.C.P."/>
            <person name="Madeira H.M.F."/>
            <person name="Manfio G.P."/>
            <person name="Maranhao A.Q."/>
            <person name="Martins W.S."/>
            <person name="di Mauro S.M.Z."/>
            <person name="de Medeiros S.R.B."/>
            <person name="Meissner R.V."/>
            <person name="Moreira M.A.M."/>
            <person name="Nascimento F.F."/>
            <person name="Nicolas M.F."/>
            <person name="Oliveira J.G."/>
            <person name="Oliveira S.C."/>
            <person name="Paixao R.F.C."/>
            <person name="Parente J.A."/>
            <person name="Pedrosa F.O."/>
            <person name="Pena S.D.J."/>
            <person name="Pereira J.O."/>
            <person name="Pereira M."/>
            <person name="Pinto L.S.R.C."/>
            <person name="Pinto L.S."/>
            <person name="Porto J.I.R."/>
            <person name="Potrich D.P."/>
            <person name="Ramalho-Neto C.E."/>
            <person name="Reis A.M.M."/>
            <person name="Rigo L.U."/>
            <person name="Rondinelli E."/>
            <person name="Santos E.B.P."/>
            <person name="Santos F.R."/>
            <person name="Schneider M.P.C."/>
            <person name="Seuanez H.N."/>
            <person name="Silva A.M.R."/>
            <person name="da Silva A.L.C."/>
            <person name="Silva D.W."/>
            <person name="Silva R."/>
            <person name="Simoes I.C."/>
            <person name="Simon D."/>
            <person name="Soares C.M.A."/>
            <person name="Soares R.B.A."/>
            <person name="Souza E.M."/>
            <person name="Souza K.R.L."/>
            <person name="Souza R.C."/>
            <person name="Steffens M.B.R."/>
            <person name="Steindel M."/>
            <person name="Teixeira S.R."/>
            <person name="Urmenyi T."/>
            <person name="Vettore A."/>
            <person name="Wassem R."/>
            <person name="Zaha A."/>
            <person name="Simpson A.J.G."/>
        </authorList>
    </citation>
    <scope>NUCLEOTIDE SEQUENCE [LARGE SCALE GENOMIC DNA]</scope>
    <source>
        <strain>ATCC 12472 / DSM 30191 / JCM 1249 / CCUG 213 / NBRC 12614 / NCIMB 9131 / NCTC 9757 / MK</strain>
    </source>
</reference>
<dbReference type="EMBL" id="AE016825">
    <property type="protein sequence ID" value="AAQ59739.1"/>
    <property type="molecule type" value="Genomic_DNA"/>
</dbReference>
<dbReference type="RefSeq" id="WP_011135615.1">
    <property type="nucleotide sequence ID" value="NC_005085.1"/>
</dbReference>
<dbReference type="SMR" id="Q7NWC3"/>
<dbReference type="STRING" id="243365.CV_2067"/>
<dbReference type="GeneID" id="66367731"/>
<dbReference type="KEGG" id="cvi:CV_2067"/>
<dbReference type="eggNOG" id="COG1159">
    <property type="taxonomic scope" value="Bacteria"/>
</dbReference>
<dbReference type="HOGENOM" id="CLU_038009_1_2_4"/>
<dbReference type="OrthoDB" id="9805918at2"/>
<dbReference type="Proteomes" id="UP000001424">
    <property type="component" value="Chromosome"/>
</dbReference>
<dbReference type="GO" id="GO:0005829">
    <property type="term" value="C:cytosol"/>
    <property type="evidence" value="ECO:0007669"/>
    <property type="project" value="TreeGrafter"/>
</dbReference>
<dbReference type="GO" id="GO:0005886">
    <property type="term" value="C:plasma membrane"/>
    <property type="evidence" value="ECO:0007669"/>
    <property type="project" value="UniProtKB-SubCell"/>
</dbReference>
<dbReference type="GO" id="GO:0005525">
    <property type="term" value="F:GTP binding"/>
    <property type="evidence" value="ECO:0007669"/>
    <property type="project" value="UniProtKB-UniRule"/>
</dbReference>
<dbReference type="GO" id="GO:0003924">
    <property type="term" value="F:GTPase activity"/>
    <property type="evidence" value="ECO:0007669"/>
    <property type="project" value="UniProtKB-UniRule"/>
</dbReference>
<dbReference type="GO" id="GO:0043024">
    <property type="term" value="F:ribosomal small subunit binding"/>
    <property type="evidence" value="ECO:0007669"/>
    <property type="project" value="TreeGrafter"/>
</dbReference>
<dbReference type="GO" id="GO:0070181">
    <property type="term" value="F:small ribosomal subunit rRNA binding"/>
    <property type="evidence" value="ECO:0007669"/>
    <property type="project" value="UniProtKB-UniRule"/>
</dbReference>
<dbReference type="GO" id="GO:0000028">
    <property type="term" value="P:ribosomal small subunit assembly"/>
    <property type="evidence" value="ECO:0007669"/>
    <property type="project" value="TreeGrafter"/>
</dbReference>
<dbReference type="CDD" id="cd04163">
    <property type="entry name" value="Era"/>
    <property type="match status" value="1"/>
</dbReference>
<dbReference type="CDD" id="cd22534">
    <property type="entry name" value="KH-II_Era"/>
    <property type="match status" value="1"/>
</dbReference>
<dbReference type="FunFam" id="3.30.300.20:FF:000003">
    <property type="entry name" value="GTPase Era"/>
    <property type="match status" value="1"/>
</dbReference>
<dbReference type="FunFam" id="3.40.50.300:FF:000094">
    <property type="entry name" value="GTPase Era"/>
    <property type="match status" value="1"/>
</dbReference>
<dbReference type="Gene3D" id="3.30.300.20">
    <property type="match status" value="1"/>
</dbReference>
<dbReference type="Gene3D" id="3.40.50.300">
    <property type="entry name" value="P-loop containing nucleotide triphosphate hydrolases"/>
    <property type="match status" value="1"/>
</dbReference>
<dbReference type="HAMAP" id="MF_00367">
    <property type="entry name" value="GTPase_Era"/>
    <property type="match status" value="1"/>
</dbReference>
<dbReference type="InterPro" id="IPR030388">
    <property type="entry name" value="G_ERA_dom"/>
</dbReference>
<dbReference type="InterPro" id="IPR006073">
    <property type="entry name" value="GTP-bd"/>
</dbReference>
<dbReference type="InterPro" id="IPR005662">
    <property type="entry name" value="GTPase_Era-like"/>
</dbReference>
<dbReference type="InterPro" id="IPR015946">
    <property type="entry name" value="KH_dom-like_a/b"/>
</dbReference>
<dbReference type="InterPro" id="IPR004044">
    <property type="entry name" value="KH_dom_type_2"/>
</dbReference>
<dbReference type="InterPro" id="IPR009019">
    <property type="entry name" value="KH_sf_prok-type"/>
</dbReference>
<dbReference type="InterPro" id="IPR027417">
    <property type="entry name" value="P-loop_NTPase"/>
</dbReference>
<dbReference type="InterPro" id="IPR005225">
    <property type="entry name" value="Small_GTP-bd"/>
</dbReference>
<dbReference type="NCBIfam" id="TIGR00436">
    <property type="entry name" value="era"/>
    <property type="match status" value="1"/>
</dbReference>
<dbReference type="NCBIfam" id="NF000908">
    <property type="entry name" value="PRK00089.1"/>
    <property type="match status" value="1"/>
</dbReference>
<dbReference type="NCBIfam" id="TIGR00231">
    <property type="entry name" value="small_GTP"/>
    <property type="match status" value="1"/>
</dbReference>
<dbReference type="PANTHER" id="PTHR42698">
    <property type="entry name" value="GTPASE ERA"/>
    <property type="match status" value="1"/>
</dbReference>
<dbReference type="PANTHER" id="PTHR42698:SF1">
    <property type="entry name" value="GTPASE ERA, MITOCHONDRIAL"/>
    <property type="match status" value="1"/>
</dbReference>
<dbReference type="Pfam" id="PF07650">
    <property type="entry name" value="KH_2"/>
    <property type="match status" value="1"/>
</dbReference>
<dbReference type="Pfam" id="PF01926">
    <property type="entry name" value="MMR_HSR1"/>
    <property type="match status" value="1"/>
</dbReference>
<dbReference type="SUPFAM" id="SSF52540">
    <property type="entry name" value="P-loop containing nucleoside triphosphate hydrolases"/>
    <property type="match status" value="1"/>
</dbReference>
<dbReference type="SUPFAM" id="SSF54814">
    <property type="entry name" value="Prokaryotic type KH domain (KH-domain type II)"/>
    <property type="match status" value="1"/>
</dbReference>
<dbReference type="PROSITE" id="PS51713">
    <property type="entry name" value="G_ERA"/>
    <property type="match status" value="1"/>
</dbReference>
<dbReference type="PROSITE" id="PS50823">
    <property type="entry name" value="KH_TYPE_2"/>
    <property type="match status" value="1"/>
</dbReference>
<feature type="chain" id="PRO_1000133770" description="GTPase Era">
    <location>
        <begin position="1"/>
        <end position="296"/>
    </location>
</feature>
<feature type="domain" description="Era-type G" evidence="2">
    <location>
        <begin position="7"/>
        <end position="174"/>
    </location>
</feature>
<feature type="domain" description="KH type-2" evidence="1">
    <location>
        <begin position="205"/>
        <end position="281"/>
    </location>
</feature>
<feature type="region of interest" description="G1" evidence="2">
    <location>
        <begin position="15"/>
        <end position="22"/>
    </location>
</feature>
<feature type="region of interest" description="G2" evidence="2">
    <location>
        <begin position="41"/>
        <end position="45"/>
    </location>
</feature>
<feature type="region of interest" description="G3" evidence="2">
    <location>
        <begin position="62"/>
        <end position="65"/>
    </location>
</feature>
<feature type="region of interest" description="G4" evidence="2">
    <location>
        <begin position="123"/>
        <end position="126"/>
    </location>
</feature>
<feature type="region of interest" description="G5" evidence="2">
    <location>
        <begin position="153"/>
        <end position="155"/>
    </location>
</feature>
<feature type="binding site" evidence="1">
    <location>
        <begin position="15"/>
        <end position="22"/>
    </location>
    <ligand>
        <name>GTP</name>
        <dbReference type="ChEBI" id="CHEBI:37565"/>
    </ligand>
</feature>
<feature type="binding site" evidence="1">
    <location>
        <begin position="62"/>
        <end position="66"/>
    </location>
    <ligand>
        <name>GTP</name>
        <dbReference type="ChEBI" id="CHEBI:37565"/>
    </ligand>
</feature>
<feature type="binding site" evidence="1">
    <location>
        <begin position="123"/>
        <end position="126"/>
    </location>
    <ligand>
        <name>GTP</name>
        <dbReference type="ChEBI" id="CHEBI:37565"/>
    </ligand>
</feature>
<keyword id="KW-0997">Cell inner membrane</keyword>
<keyword id="KW-1003">Cell membrane</keyword>
<keyword id="KW-0963">Cytoplasm</keyword>
<keyword id="KW-0342">GTP-binding</keyword>
<keyword id="KW-0472">Membrane</keyword>
<keyword id="KW-0547">Nucleotide-binding</keyword>
<keyword id="KW-1185">Reference proteome</keyword>
<keyword id="KW-0690">Ribosome biogenesis</keyword>
<keyword id="KW-0694">RNA-binding</keyword>
<keyword id="KW-0699">rRNA-binding</keyword>